<evidence type="ECO:0000255" key="1">
    <source>
        <dbReference type="HAMAP-Rule" id="MF_00595"/>
    </source>
</evidence>
<organism>
    <name type="scientific">Trichormus variabilis (strain ATCC 29413 / PCC 7937)</name>
    <name type="common">Anabaena variabilis</name>
    <dbReference type="NCBI Taxonomy" id="240292"/>
    <lineage>
        <taxon>Bacteria</taxon>
        <taxon>Bacillati</taxon>
        <taxon>Cyanobacteriota</taxon>
        <taxon>Cyanophyceae</taxon>
        <taxon>Nostocales</taxon>
        <taxon>Nostocaceae</taxon>
        <taxon>Trichormus</taxon>
    </lineage>
</organism>
<sequence>MGSVLYSLSESANLYPASELFLRHRLQIVEELWESVLRQECGQNMVDLLRQLRDLCSPEGQATKDQAVSAVKLIEQLNINEAIRAARAFALYFQLINIIEQEYEQRQQLTRYSDLEAETAPLNGSENITSSSNHNEDDVIFNRGLGTDFLGKNWTNRGQGKQKGTFAALFPLLSKLNVPPQQIQRLISQLDVRLVFTAHPTEIVRHTIRDKQRQVVDLLQQLDEVENRAKEGGGYPWEAGEIREKLLEEIRLWWRTDELHQFKPTVLDEVDYALHYFQEVLFDGIPQLYKRFKYALNQTFSWLEPPSKDFCSFGSWVGSDRDGNPSVTPEITWQTACYQRKMVLERYIKSVKQLIELLSISMHWSDVLPDLLESLELDQSQLSEVYDALALRYRQEPYRLKLAYVLKRLENTRDRNLALYKGETPTNEDSPMYRSGAEFLAELRLIQHNLTETGLSCRELDNLICQVEIFDFNLTKLDIRQESTRHSDALNEILDYLQLLPQPYNDLSEEQRVAWLTTELQTRRPLISSELPFSDKTNDVIKTFRVVRSLQQEFGINICQTYIISMCRQVSDVLEVLLLAKEARLFDPAIAVGTIQVVPLFETVEDLQRSRSVMRQLFELPLYRALLAGGYKSTEVKVPSPESTPLPTPHSVLTPDLQEVMLGYSDSNKDSGFLSSNWEIHKAQKSLQKIAEEYGVNLRIFHGRGGSVGRGGGPAHEAILAQPGHSINGRIKITEQGEVLASKYSLLDLALYNLETITTAVIQASLLRTGFDDIEPWNEIMEELAARSRQHYRGLIYEQPDFIDFFHQVTPIEEISQLQISSRPARRPSGKKDLSSLRAIPWVFSWTQTRFLLPSWYGVGTALQEFFNEEPEEHLKLMRYFYVKWPFFKMVISKVEMTLAKVDMQMAGHYVQELSDPEDKSRFEKVFEQIANEYYLTRDLVLKITDHSRLLDGDPVLQRSVQLRNGTIVPLGFIQVSLLKRLRQSKNNNATSGVIHSRYSKGELLRGALLTINGIAAGMRNTG</sequence>
<keyword id="KW-0120">Carbon dioxide fixation</keyword>
<keyword id="KW-0456">Lyase</keyword>
<keyword id="KW-0460">Magnesium</keyword>
<protein>
    <recommendedName>
        <fullName evidence="1">Phosphoenolpyruvate carboxylase</fullName>
        <shortName evidence="1">PEPC</shortName>
        <shortName evidence="1">PEPCase</shortName>
        <ecNumber evidence="1">4.1.1.31</ecNumber>
    </recommendedName>
</protein>
<reference key="1">
    <citation type="journal article" date="2014" name="Stand. Genomic Sci.">
        <title>Complete genome sequence of Anabaena variabilis ATCC 29413.</title>
        <authorList>
            <person name="Thiel T."/>
            <person name="Pratte B.S."/>
            <person name="Zhong J."/>
            <person name="Goodwin L."/>
            <person name="Copeland A."/>
            <person name="Lucas S."/>
            <person name="Han C."/>
            <person name="Pitluck S."/>
            <person name="Land M.L."/>
            <person name="Kyrpides N.C."/>
            <person name="Woyke T."/>
        </authorList>
    </citation>
    <scope>NUCLEOTIDE SEQUENCE [LARGE SCALE GENOMIC DNA]</scope>
    <source>
        <strain>ATCC 29413 / PCC 7937</strain>
    </source>
</reference>
<gene>
    <name evidence="1" type="primary">ppc</name>
    <name type="ordered locus">Ava_2134</name>
</gene>
<accession>Q3MB82</accession>
<feature type="chain" id="PRO_1000025547" description="Phosphoenolpyruvate carboxylase">
    <location>
        <begin position="1"/>
        <end position="1023"/>
    </location>
</feature>
<feature type="active site" evidence="1">
    <location>
        <position position="199"/>
    </location>
</feature>
<feature type="active site" evidence="1">
    <location>
        <position position="669"/>
    </location>
</feature>
<dbReference type="EC" id="4.1.1.31" evidence="1"/>
<dbReference type="EMBL" id="CP000117">
    <property type="protein sequence ID" value="ABA21754.1"/>
    <property type="molecule type" value="Genomic_DNA"/>
</dbReference>
<dbReference type="SMR" id="Q3MB82"/>
<dbReference type="STRING" id="240292.Ava_2134"/>
<dbReference type="KEGG" id="ava:Ava_2134"/>
<dbReference type="eggNOG" id="COG2352">
    <property type="taxonomic scope" value="Bacteria"/>
</dbReference>
<dbReference type="HOGENOM" id="CLU_006557_2_0_3"/>
<dbReference type="Proteomes" id="UP000002533">
    <property type="component" value="Chromosome"/>
</dbReference>
<dbReference type="GO" id="GO:0005829">
    <property type="term" value="C:cytosol"/>
    <property type="evidence" value="ECO:0007669"/>
    <property type="project" value="TreeGrafter"/>
</dbReference>
<dbReference type="GO" id="GO:0000287">
    <property type="term" value="F:magnesium ion binding"/>
    <property type="evidence" value="ECO:0007669"/>
    <property type="project" value="UniProtKB-UniRule"/>
</dbReference>
<dbReference type="GO" id="GO:0008964">
    <property type="term" value="F:phosphoenolpyruvate carboxylase activity"/>
    <property type="evidence" value="ECO:0007669"/>
    <property type="project" value="UniProtKB-UniRule"/>
</dbReference>
<dbReference type="GO" id="GO:0015977">
    <property type="term" value="P:carbon fixation"/>
    <property type="evidence" value="ECO:0007669"/>
    <property type="project" value="UniProtKB-UniRule"/>
</dbReference>
<dbReference type="GO" id="GO:0006107">
    <property type="term" value="P:oxaloacetate metabolic process"/>
    <property type="evidence" value="ECO:0007669"/>
    <property type="project" value="UniProtKB-UniRule"/>
</dbReference>
<dbReference type="GO" id="GO:0006099">
    <property type="term" value="P:tricarboxylic acid cycle"/>
    <property type="evidence" value="ECO:0007669"/>
    <property type="project" value="InterPro"/>
</dbReference>
<dbReference type="Gene3D" id="1.20.1440.90">
    <property type="entry name" value="Phosphoenolpyruvate/pyruvate domain"/>
    <property type="match status" value="1"/>
</dbReference>
<dbReference type="HAMAP" id="MF_00595">
    <property type="entry name" value="PEPcase_type1"/>
    <property type="match status" value="1"/>
</dbReference>
<dbReference type="InterPro" id="IPR021135">
    <property type="entry name" value="PEP_COase"/>
</dbReference>
<dbReference type="InterPro" id="IPR022805">
    <property type="entry name" value="PEP_COase_bac/pln-type"/>
</dbReference>
<dbReference type="InterPro" id="IPR018129">
    <property type="entry name" value="PEP_COase_Lys_AS"/>
</dbReference>
<dbReference type="InterPro" id="IPR033129">
    <property type="entry name" value="PEPCASE_His_AS"/>
</dbReference>
<dbReference type="InterPro" id="IPR015813">
    <property type="entry name" value="Pyrv/PenolPyrv_kinase-like_dom"/>
</dbReference>
<dbReference type="NCBIfam" id="NF000584">
    <property type="entry name" value="PRK00009.1"/>
    <property type="match status" value="1"/>
</dbReference>
<dbReference type="PANTHER" id="PTHR30523">
    <property type="entry name" value="PHOSPHOENOLPYRUVATE CARBOXYLASE"/>
    <property type="match status" value="1"/>
</dbReference>
<dbReference type="PANTHER" id="PTHR30523:SF6">
    <property type="entry name" value="PHOSPHOENOLPYRUVATE CARBOXYLASE"/>
    <property type="match status" value="1"/>
</dbReference>
<dbReference type="Pfam" id="PF00311">
    <property type="entry name" value="PEPcase"/>
    <property type="match status" value="1"/>
</dbReference>
<dbReference type="PRINTS" id="PR00150">
    <property type="entry name" value="PEPCARBXLASE"/>
</dbReference>
<dbReference type="SUPFAM" id="SSF51621">
    <property type="entry name" value="Phosphoenolpyruvate/pyruvate domain"/>
    <property type="match status" value="1"/>
</dbReference>
<dbReference type="PROSITE" id="PS00781">
    <property type="entry name" value="PEPCASE_1"/>
    <property type="match status" value="1"/>
</dbReference>
<dbReference type="PROSITE" id="PS00393">
    <property type="entry name" value="PEPCASE_2"/>
    <property type="match status" value="1"/>
</dbReference>
<proteinExistence type="inferred from homology"/>
<name>CAPP_TRIV2</name>
<comment type="function">
    <text evidence="1">Forms oxaloacetate, a four-carbon dicarboxylic acid source for the tricarboxylic acid cycle.</text>
</comment>
<comment type="catalytic activity">
    <reaction evidence="1">
        <text>oxaloacetate + phosphate = phosphoenolpyruvate + hydrogencarbonate</text>
        <dbReference type="Rhea" id="RHEA:28370"/>
        <dbReference type="ChEBI" id="CHEBI:16452"/>
        <dbReference type="ChEBI" id="CHEBI:17544"/>
        <dbReference type="ChEBI" id="CHEBI:43474"/>
        <dbReference type="ChEBI" id="CHEBI:58702"/>
        <dbReference type="EC" id="4.1.1.31"/>
    </reaction>
</comment>
<comment type="cofactor">
    <cofactor evidence="1">
        <name>Mg(2+)</name>
        <dbReference type="ChEBI" id="CHEBI:18420"/>
    </cofactor>
</comment>
<comment type="similarity">
    <text evidence="1">Belongs to the PEPCase type 1 family.</text>
</comment>